<dbReference type="EMBL" id="AE016853">
    <property type="protein sequence ID" value="AAO58370.1"/>
    <property type="molecule type" value="Genomic_DNA"/>
</dbReference>
<dbReference type="RefSeq" id="NP_794675.1">
    <property type="nucleotide sequence ID" value="NC_004578.1"/>
</dbReference>
<dbReference type="RefSeq" id="WP_002551819.1">
    <property type="nucleotide sequence ID" value="NC_004578.1"/>
</dbReference>
<dbReference type="SMR" id="Q87VJ4"/>
<dbReference type="STRING" id="223283.PSPTO_4942"/>
<dbReference type="GeneID" id="96216907"/>
<dbReference type="KEGG" id="pst:PSPTO_4942"/>
<dbReference type="PATRIC" id="fig|223283.9.peg.5056"/>
<dbReference type="eggNOG" id="COG1923">
    <property type="taxonomic scope" value="Bacteria"/>
</dbReference>
<dbReference type="HOGENOM" id="CLU_113688_2_2_6"/>
<dbReference type="OrthoDB" id="9799751at2"/>
<dbReference type="PhylomeDB" id="Q87VJ4"/>
<dbReference type="Proteomes" id="UP000002515">
    <property type="component" value="Chromosome"/>
</dbReference>
<dbReference type="GO" id="GO:0005829">
    <property type="term" value="C:cytosol"/>
    <property type="evidence" value="ECO:0007669"/>
    <property type="project" value="TreeGrafter"/>
</dbReference>
<dbReference type="GO" id="GO:0003723">
    <property type="term" value="F:RNA binding"/>
    <property type="evidence" value="ECO:0007669"/>
    <property type="project" value="UniProtKB-UniRule"/>
</dbReference>
<dbReference type="GO" id="GO:0006355">
    <property type="term" value="P:regulation of DNA-templated transcription"/>
    <property type="evidence" value="ECO:0007669"/>
    <property type="project" value="InterPro"/>
</dbReference>
<dbReference type="GO" id="GO:0043487">
    <property type="term" value="P:regulation of RNA stability"/>
    <property type="evidence" value="ECO:0007669"/>
    <property type="project" value="TreeGrafter"/>
</dbReference>
<dbReference type="GO" id="GO:0045974">
    <property type="term" value="P:regulation of translation, ncRNA-mediated"/>
    <property type="evidence" value="ECO:0007669"/>
    <property type="project" value="TreeGrafter"/>
</dbReference>
<dbReference type="CDD" id="cd01716">
    <property type="entry name" value="Hfq"/>
    <property type="match status" value="1"/>
</dbReference>
<dbReference type="FunFam" id="2.30.30.100:FF:000001">
    <property type="entry name" value="RNA-binding protein Hfq"/>
    <property type="match status" value="1"/>
</dbReference>
<dbReference type="Gene3D" id="2.30.30.100">
    <property type="match status" value="1"/>
</dbReference>
<dbReference type="HAMAP" id="MF_00436">
    <property type="entry name" value="Hfq"/>
    <property type="match status" value="1"/>
</dbReference>
<dbReference type="InterPro" id="IPR005001">
    <property type="entry name" value="Hfq"/>
</dbReference>
<dbReference type="InterPro" id="IPR010920">
    <property type="entry name" value="LSM_dom_sf"/>
</dbReference>
<dbReference type="InterPro" id="IPR047575">
    <property type="entry name" value="Sm"/>
</dbReference>
<dbReference type="NCBIfam" id="TIGR02383">
    <property type="entry name" value="Hfq"/>
    <property type="match status" value="1"/>
</dbReference>
<dbReference type="NCBIfam" id="NF001602">
    <property type="entry name" value="PRK00395.1"/>
    <property type="match status" value="1"/>
</dbReference>
<dbReference type="PANTHER" id="PTHR34772">
    <property type="entry name" value="RNA-BINDING PROTEIN HFQ"/>
    <property type="match status" value="1"/>
</dbReference>
<dbReference type="PANTHER" id="PTHR34772:SF1">
    <property type="entry name" value="RNA-BINDING PROTEIN HFQ"/>
    <property type="match status" value="1"/>
</dbReference>
<dbReference type="Pfam" id="PF17209">
    <property type="entry name" value="Hfq"/>
    <property type="match status" value="1"/>
</dbReference>
<dbReference type="SUPFAM" id="SSF50182">
    <property type="entry name" value="Sm-like ribonucleoproteins"/>
    <property type="match status" value="1"/>
</dbReference>
<dbReference type="PROSITE" id="PS52002">
    <property type="entry name" value="SM"/>
    <property type="match status" value="1"/>
</dbReference>
<protein>
    <recommendedName>
        <fullName evidence="1">RNA-binding protein Hfq</fullName>
    </recommendedName>
</protein>
<feature type="chain" id="PRO_0000095658" description="RNA-binding protein Hfq">
    <location>
        <begin position="1"/>
        <end position="86"/>
    </location>
</feature>
<feature type="domain" description="Sm" evidence="2">
    <location>
        <begin position="9"/>
        <end position="68"/>
    </location>
</feature>
<gene>
    <name evidence="1" type="primary">hfq</name>
    <name type="ordered locus">PSPTO_4942</name>
</gene>
<reference key="1">
    <citation type="journal article" date="2003" name="Proc. Natl. Acad. Sci. U.S.A.">
        <title>The complete genome sequence of the Arabidopsis and tomato pathogen Pseudomonas syringae pv. tomato DC3000.</title>
        <authorList>
            <person name="Buell C.R."/>
            <person name="Joardar V."/>
            <person name="Lindeberg M."/>
            <person name="Selengut J."/>
            <person name="Paulsen I.T."/>
            <person name="Gwinn M.L."/>
            <person name="Dodson R.J."/>
            <person name="DeBoy R.T."/>
            <person name="Durkin A.S."/>
            <person name="Kolonay J.F."/>
            <person name="Madupu R."/>
            <person name="Daugherty S.C."/>
            <person name="Brinkac L.M."/>
            <person name="Beanan M.J."/>
            <person name="Haft D.H."/>
            <person name="Nelson W.C."/>
            <person name="Davidsen T.M."/>
            <person name="Zafar N."/>
            <person name="Zhou L."/>
            <person name="Liu J."/>
            <person name="Yuan Q."/>
            <person name="Khouri H.M."/>
            <person name="Fedorova N.B."/>
            <person name="Tran B."/>
            <person name="Russell D."/>
            <person name="Berry K.J."/>
            <person name="Utterback T.R."/>
            <person name="Van Aken S.E."/>
            <person name="Feldblyum T.V."/>
            <person name="D'Ascenzo M."/>
            <person name="Deng W.-L."/>
            <person name="Ramos A.R."/>
            <person name="Alfano J.R."/>
            <person name="Cartinhour S."/>
            <person name="Chatterjee A.K."/>
            <person name="Delaney T.P."/>
            <person name="Lazarowitz S.G."/>
            <person name="Martin G.B."/>
            <person name="Schneider D.J."/>
            <person name="Tang X."/>
            <person name="Bender C.L."/>
            <person name="White O."/>
            <person name="Fraser C.M."/>
            <person name="Collmer A."/>
        </authorList>
    </citation>
    <scope>NUCLEOTIDE SEQUENCE [LARGE SCALE GENOMIC DNA]</scope>
    <source>
        <strain>ATCC BAA-871 / DC3000</strain>
    </source>
</reference>
<proteinExistence type="inferred from homology"/>
<organism>
    <name type="scientific">Pseudomonas syringae pv. tomato (strain ATCC BAA-871 / DC3000)</name>
    <dbReference type="NCBI Taxonomy" id="223283"/>
    <lineage>
        <taxon>Bacteria</taxon>
        <taxon>Pseudomonadati</taxon>
        <taxon>Pseudomonadota</taxon>
        <taxon>Gammaproteobacteria</taxon>
        <taxon>Pseudomonadales</taxon>
        <taxon>Pseudomonadaceae</taxon>
        <taxon>Pseudomonas</taxon>
    </lineage>
</organism>
<evidence type="ECO:0000255" key="1">
    <source>
        <dbReference type="HAMAP-Rule" id="MF_00436"/>
    </source>
</evidence>
<evidence type="ECO:0000255" key="2">
    <source>
        <dbReference type="PROSITE-ProRule" id="PRU01346"/>
    </source>
</evidence>
<accession>Q87VJ4</accession>
<sequence length="86" mass="9354">MSKGHSLQDPYLNTLRKEKVGVSIYLVNGIKLQGTIESFDQFVILLKNTVSQMVYKHAISTVVPVRPIRLPSATDADGADAEPGNA</sequence>
<name>HFQ_PSESM</name>
<keyword id="KW-1185">Reference proteome</keyword>
<keyword id="KW-0694">RNA-binding</keyword>
<keyword id="KW-0346">Stress response</keyword>
<comment type="function">
    <text evidence="1">RNA chaperone that binds small regulatory RNA (sRNAs) and mRNAs to facilitate mRNA translational regulation in response to envelope stress, environmental stress and changes in metabolite concentrations. Also binds with high specificity to tRNAs.</text>
</comment>
<comment type="subunit">
    <text evidence="1">Homohexamer.</text>
</comment>
<comment type="similarity">
    <text evidence="1">Belongs to the Hfq family.</text>
</comment>